<reference key="1">
    <citation type="journal article" date="2002" name="Proc. Natl. Acad. Sci. U.S.A.">
        <title>Extensive mosaic structure revealed by the complete genome sequence of uropathogenic Escherichia coli.</title>
        <authorList>
            <person name="Welch R.A."/>
            <person name="Burland V."/>
            <person name="Plunkett G. III"/>
            <person name="Redford P."/>
            <person name="Roesch P."/>
            <person name="Rasko D."/>
            <person name="Buckles E.L."/>
            <person name="Liou S.-R."/>
            <person name="Boutin A."/>
            <person name="Hackett J."/>
            <person name="Stroud D."/>
            <person name="Mayhew G.F."/>
            <person name="Rose D.J."/>
            <person name="Zhou S."/>
            <person name="Schwartz D.C."/>
            <person name="Perna N.T."/>
            <person name="Mobley H.L.T."/>
            <person name="Donnenberg M.S."/>
            <person name="Blattner F.R."/>
        </authorList>
    </citation>
    <scope>NUCLEOTIDE SEQUENCE [LARGE SCALE GENOMIC DNA]</scope>
    <source>
        <strain>CFT073 / ATCC 700928 / UPEC</strain>
    </source>
</reference>
<organism>
    <name type="scientific">Escherichia coli O6:H1 (strain CFT073 / ATCC 700928 / UPEC)</name>
    <dbReference type="NCBI Taxonomy" id="199310"/>
    <lineage>
        <taxon>Bacteria</taxon>
        <taxon>Pseudomonadati</taxon>
        <taxon>Pseudomonadota</taxon>
        <taxon>Gammaproteobacteria</taxon>
        <taxon>Enterobacterales</taxon>
        <taxon>Enterobacteriaceae</taxon>
        <taxon>Escherichia</taxon>
    </lineage>
</organism>
<protein>
    <recommendedName>
        <fullName evidence="1">3'(2'),5'-bisphosphate nucleotidase CysQ</fullName>
        <ecNumber evidence="1">3.1.3.7</ecNumber>
    </recommendedName>
    <alternativeName>
        <fullName evidence="1">3'(2'),5-bisphosphonucleoside 3'(2')-phosphohydrolase</fullName>
    </alternativeName>
    <alternativeName>
        <fullName evidence="1">3'-phosphoadenosine 5'-phosphate phosphatase</fullName>
        <shortName evidence="1">PAP phosphatase</shortName>
    </alternativeName>
</protein>
<proteinExistence type="inferred from homology"/>
<evidence type="ECO:0000255" key="1">
    <source>
        <dbReference type="HAMAP-Rule" id="MF_02095"/>
    </source>
</evidence>
<evidence type="ECO:0000305" key="2"/>
<name>CYSQ_ECOL6</name>
<sequence length="246" mass="27190">MLDQVCQLARNAGDAIMQVYDGTKPMDVVSKADNSPVTAADIAAHTVIMDGLRTLTPDIPVLSEEDPPGWEVRQHWQRYWLVDPLDGTKEFIKRNGEFTVNIALIDHGKPILGVVYAPVMNVMYSAAEGKAWKEECGVRKQIQVRDARPPLVVISRSHADAELKEYLQQLGEHQTTSIGSSLKFCLVAEGQAQLYPRFGPTNIWDTAAGHAVAAAAGAHVHDWQGKPLDYTPRESFLNPGFRVSIY</sequence>
<accession>Q8FAG5</accession>
<comment type="function">
    <text evidence="1">Converts adenosine-3',5'-bisphosphate (PAP) to AMP.</text>
</comment>
<comment type="catalytic activity">
    <reaction evidence="1">
        <text>adenosine 3',5'-bisphosphate + H2O = AMP + phosphate</text>
        <dbReference type="Rhea" id="RHEA:10040"/>
        <dbReference type="ChEBI" id="CHEBI:15377"/>
        <dbReference type="ChEBI" id="CHEBI:43474"/>
        <dbReference type="ChEBI" id="CHEBI:58343"/>
        <dbReference type="ChEBI" id="CHEBI:456215"/>
        <dbReference type="EC" id="3.1.3.7"/>
    </reaction>
</comment>
<comment type="cofactor">
    <cofactor evidence="1">
        <name>Mg(2+)</name>
        <dbReference type="ChEBI" id="CHEBI:18420"/>
    </cofactor>
</comment>
<comment type="subcellular location">
    <subcellularLocation>
        <location evidence="1">Cell inner membrane</location>
        <topology evidence="1">Peripheral membrane protein</topology>
        <orientation evidence="1">Cytoplasmic side</orientation>
    </subcellularLocation>
</comment>
<comment type="similarity">
    <text evidence="1 2">Belongs to the inositol monophosphatase superfamily. CysQ family.</text>
</comment>
<dbReference type="EC" id="3.1.3.7" evidence="1"/>
<dbReference type="EMBL" id="AE014075">
    <property type="protein sequence ID" value="AAN83734.1"/>
    <property type="molecule type" value="Genomic_DNA"/>
</dbReference>
<dbReference type="RefSeq" id="WP_000886909.1">
    <property type="nucleotide sequence ID" value="NZ_CP051263.1"/>
</dbReference>
<dbReference type="SMR" id="Q8FAG5"/>
<dbReference type="STRING" id="199310.c5313"/>
<dbReference type="GeneID" id="93777607"/>
<dbReference type="KEGG" id="ecc:c5313"/>
<dbReference type="eggNOG" id="COG1218">
    <property type="taxonomic scope" value="Bacteria"/>
</dbReference>
<dbReference type="HOGENOM" id="CLU_044118_3_0_6"/>
<dbReference type="BioCyc" id="ECOL199310:C5313-MONOMER"/>
<dbReference type="Proteomes" id="UP000001410">
    <property type="component" value="Chromosome"/>
</dbReference>
<dbReference type="GO" id="GO:0005886">
    <property type="term" value="C:plasma membrane"/>
    <property type="evidence" value="ECO:0007669"/>
    <property type="project" value="UniProtKB-SubCell"/>
</dbReference>
<dbReference type="GO" id="GO:0008441">
    <property type="term" value="F:3'(2'),5'-bisphosphate nucleotidase activity"/>
    <property type="evidence" value="ECO:0007669"/>
    <property type="project" value="UniProtKB-UniRule"/>
</dbReference>
<dbReference type="GO" id="GO:0000287">
    <property type="term" value="F:magnesium ion binding"/>
    <property type="evidence" value="ECO:0007669"/>
    <property type="project" value="UniProtKB-UniRule"/>
</dbReference>
<dbReference type="GO" id="GO:0050427">
    <property type="term" value="P:3'-phosphoadenosine 5'-phosphosulfate metabolic process"/>
    <property type="evidence" value="ECO:0007669"/>
    <property type="project" value="TreeGrafter"/>
</dbReference>
<dbReference type="GO" id="GO:0046854">
    <property type="term" value="P:phosphatidylinositol phosphate biosynthetic process"/>
    <property type="evidence" value="ECO:0007669"/>
    <property type="project" value="InterPro"/>
</dbReference>
<dbReference type="GO" id="GO:0000103">
    <property type="term" value="P:sulfate assimilation"/>
    <property type="evidence" value="ECO:0007669"/>
    <property type="project" value="TreeGrafter"/>
</dbReference>
<dbReference type="CDD" id="cd01638">
    <property type="entry name" value="CysQ"/>
    <property type="match status" value="1"/>
</dbReference>
<dbReference type="FunFam" id="3.30.540.10:FF:000007">
    <property type="entry name" value="3'(2'),5'-bisphosphate nucleotidase CysQ"/>
    <property type="match status" value="1"/>
</dbReference>
<dbReference type="FunFam" id="3.40.190.80:FF:000005">
    <property type="entry name" value="3'(2'),5'-bisphosphate nucleotidase CysQ"/>
    <property type="match status" value="1"/>
</dbReference>
<dbReference type="Gene3D" id="3.40.190.80">
    <property type="match status" value="1"/>
</dbReference>
<dbReference type="Gene3D" id="3.30.540.10">
    <property type="entry name" value="Fructose-1,6-Bisphosphatase, subunit A, domain 1"/>
    <property type="match status" value="1"/>
</dbReference>
<dbReference type="HAMAP" id="MF_02095">
    <property type="entry name" value="CysQ"/>
    <property type="match status" value="1"/>
</dbReference>
<dbReference type="InterPro" id="IPR006240">
    <property type="entry name" value="CysQ"/>
</dbReference>
<dbReference type="InterPro" id="IPR050725">
    <property type="entry name" value="CysQ/Inositol_MonoPase"/>
</dbReference>
<dbReference type="InterPro" id="IPR020583">
    <property type="entry name" value="Inositol_monoP_metal-BS"/>
</dbReference>
<dbReference type="InterPro" id="IPR000760">
    <property type="entry name" value="Inositol_monophosphatase-like"/>
</dbReference>
<dbReference type="InterPro" id="IPR020550">
    <property type="entry name" value="Inositol_monophosphatase_CS"/>
</dbReference>
<dbReference type="NCBIfam" id="TIGR01331">
    <property type="entry name" value="bisphos_cysQ"/>
    <property type="match status" value="1"/>
</dbReference>
<dbReference type="NCBIfam" id="NF008182">
    <property type="entry name" value="PRK10931.1"/>
    <property type="match status" value="1"/>
</dbReference>
<dbReference type="PANTHER" id="PTHR43028">
    <property type="entry name" value="3'(2'),5'-BISPHOSPHATE NUCLEOTIDASE 1"/>
    <property type="match status" value="1"/>
</dbReference>
<dbReference type="PANTHER" id="PTHR43028:SF5">
    <property type="entry name" value="3'(2'),5'-BISPHOSPHATE NUCLEOTIDASE 1"/>
    <property type="match status" value="1"/>
</dbReference>
<dbReference type="Pfam" id="PF00459">
    <property type="entry name" value="Inositol_P"/>
    <property type="match status" value="1"/>
</dbReference>
<dbReference type="SUPFAM" id="SSF56655">
    <property type="entry name" value="Carbohydrate phosphatase"/>
    <property type="match status" value="1"/>
</dbReference>
<dbReference type="PROSITE" id="PS00629">
    <property type="entry name" value="IMP_1"/>
    <property type="match status" value="1"/>
</dbReference>
<dbReference type="PROSITE" id="PS00630">
    <property type="entry name" value="IMP_2"/>
    <property type="match status" value="1"/>
</dbReference>
<gene>
    <name evidence="1" type="primary">cysQ</name>
    <name type="ordered locus">c5313</name>
</gene>
<keyword id="KW-0997">Cell inner membrane</keyword>
<keyword id="KW-1003">Cell membrane</keyword>
<keyword id="KW-0378">Hydrolase</keyword>
<keyword id="KW-0460">Magnesium</keyword>
<keyword id="KW-0472">Membrane</keyword>
<keyword id="KW-0479">Metal-binding</keyword>
<keyword id="KW-1185">Reference proteome</keyword>
<feature type="chain" id="PRO_0000142542" description="3'(2'),5'-bisphosphate nucleotidase CysQ">
    <location>
        <begin position="1"/>
        <end position="246"/>
    </location>
</feature>
<feature type="binding site" evidence="1">
    <location>
        <position position="64"/>
    </location>
    <ligand>
        <name>Mg(2+)</name>
        <dbReference type="ChEBI" id="CHEBI:18420"/>
        <label>1</label>
    </ligand>
</feature>
<feature type="binding site" evidence="1">
    <location>
        <position position="64"/>
    </location>
    <ligand>
        <name>substrate</name>
    </ligand>
</feature>
<feature type="binding site" evidence="1">
    <location>
        <position position="83"/>
    </location>
    <ligand>
        <name>Mg(2+)</name>
        <dbReference type="ChEBI" id="CHEBI:18420"/>
        <label>1</label>
    </ligand>
</feature>
<feature type="binding site" evidence="1">
    <location>
        <position position="83"/>
    </location>
    <ligand>
        <name>Mg(2+)</name>
        <dbReference type="ChEBI" id="CHEBI:18420"/>
        <label>2</label>
    </ligand>
</feature>
<feature type="binding site" evidence="1">
    <location>
        <begin position="85"/>
        <end position="88"/>
    </location>
    <ligand>
        <name>substrate</name>
    </ligand>
</feature>
<feature type="binding site" evidence="1">
    <location>
        <position position="85"/>
    </location>
    <ligand>
        <name>Mg(2+)</name>
        <dbReference type="ChEBI" id="CHEBI:18420"/>
        <label>1</label>
    </ligand>
</feature>
<feature type="binding site" evidence="1">
    <location>
        <position position="86"/>
    </location>
    <ligand>
        <name>Mg(2+)</name>
        <dbReference type="ChEBI" id="CHEBI:18420"/>
        <label>2</label>
    </ligand>
</feature>
<feature type="binding site" evidence="1">
    <location>
        <position position="205"/>
    </location>
    <ligand>
        <name>Mg(2+)</name>
        <dbReference type="ChEBI" id="CHEBI:18420"/>
        <label>2</label>
    </ligand>
</feature>
<feature type="binding site" evidence="1">
    <location>
        <position position="205"/>
    </location>
    <ligand>
        <name>substrate</name>
    </ligand>
</feature>